<sequence>MDQKQIEEIVRSVMASMGQDVPQPVAPSTQEGAKPQRAAPTATESCALDLGSAEAKAWIGVENPHRADVLTELRRSTAARVCTGRAGPRPRTQALLRFLADHSRSKDTVLKEVPEEWVKAQGLLEVRSEISDKNRYLTRPDMGRRLSQEAIDALKSQCVMNPDVQVVISDGLSTDAITANYEEILPPLLAGLKQAGLKVGTPFFVRYGRVKIEDQIGELLGAKVVILLVGERPGLGQSESLSCYAVYSPRVTTTVEADRTCISNIHQGGTPPVEAAAVIVDLAKRMLEQKASGINMTR</sequence>
<organism>
    <name type="scientific">Salmonella arizonae (strain ATCC BAA-731 / CDC346-86 / RSK2980)</name>
    <dbReference type="NCBI Taxonomy" id="41514"/>
    <lineage>
        <taxon>Bacteria</taxon>
        <taxon>Pseudomonadati</taxon>
        <taxon>Pseudomonadota</taxon>
        <taxon>Gammaproteobacteria</taxon>
        <taxon>Enterobacterales</taxon>
        <taxon>Enterobacteriaceae</taxon>
        <taxon>Salmonella</taxon>
    </lineage>
</organism>
<evidence type="ECO:0000255" key="1">
    <source>
        <dbReference type="HAMAP-Rule" id="MF_00601"/>
    </source>
</evidence>
<evidence type="ECO:0000256" key="2">
    <source>
        <dbReference type="SAM" id="MobiDB-lite"/>
    </source>
</evidence>
<gene>
    <name evidence="1" type="primary">eutC</name>
    <name type="ordered locus">SARI_00427</name>
</gene>
<reference key="1">
    <citation type="submission" date="2007-11" db="EMBL/GenBank/DDBJ databases">
        <authorList>
            <consortium name="The Salmonella enterica serovar Arizonae Genome Sequencing Project"/>
            <person name="McClelland M."/>
            <person name="Sanderson E.K."/>
            <person name="Porwollik S."/>
            <person name="Spieth J."/>
            <person name="Clifton W.S."/>
            <person name="Fulton R."/>
            <person name="Chunyan W."/>
            <person name="Wollam A."/>
            <person name="Shah N."/>
            <person name="Pepin K."/>
            <person name="Bhonagiri V."/>
            <person name="Nash W."/>
            <person name="Johnson M."/>
            <person name="Thiruvilangam P."/>
            <person name="Wilson R."/>
        </authorList>
    </citation>
    <scope>NUCLEOTIDE SEQUENCE [LARGE SCALE GENOMIC DNA]</scope>
    <source>
        <strain>ATCC BAA-731 / CDC346-86 / RSK2980</strain>
    </source>
</reference>
<feature type="chain" id="PRO_1000082499" description="Ethanolamine ammonia-lyase small subunit">
    <location>
        <begin position="1"/>
        <end position="298"/>
    </location>
</feature>
<feature type="region of interest" description="Disordered" evidence="2">
    <location>
        <begin position="15"/>
        <end position="43"/>
    </location>
</feature>
<feature type="binding site" evidence="1">
    <location>
        <position position="210"/>
    </location>
    <ligand>
        <name>adenosylcob(III)alamin</name>
        <dbReference type="ChEBI" id="CHEBI:18408"/>
    </ligand>
</feature>
<feature type="binding site" evidence="1">
    <location>
        <position position="231"/>
    </location>
    <ligand>
        <name>adenosylcob(III)alamin</name>
        <dbReference type="ChEBI" id="CHEBI:18408"/>
    </ligand>
</feature>
<feature type="binding site" evidence="1">
    <location>
        <position position="261"/>
    </location>
    <ligand>
        <name>adenosylcob(III)alamin</name>
        <dbReference type="ChEBI" id="CHEBI:18408"/>
    </ligand>
</feature>
<protein>
    <recommendedName>
        <fullName evidence="1">Ethanolamine ammonia-lyase small subunit</fullName>
        <shortName evidence="1">EAL small subunit</shortName>
        <ecNumber evidence="1">4.3.1.7</ecNumber>
    </recommendedName>
</protein>
<comment type="function">
    <text evidence="1">Catalyzes the deamination of various vicinal amino-alcohols to oxo compounds. Allows this organism to utilize ethanolamine as the sole source of nitrogen and carbon in the presence of external vitamin B12.</text>
</comment>
<comment type="catalytic activity">
    <reaction evidence="1">
        <text>ethanolamine = acetaldehyde + NH4(+)</text>
        <dbReference type="Rhea" id="RHEA:15313"/>
        <dbReference type="ChEBI" id="CHEBI:15343"/>
        <dbReference type="ChEBI" id="CHEBI:28938"/>
        <dbReference type="ChEBI" id="CHEBI:57603"/>
        <dbReference type="EC" id="4.3.1.7"/>
    </reaction>
</comment>
<comment type="cofactor">
    <cofactor evidence="1">
        <name>adenosylcob(III)alamin</name>
        <dbReference type="ChEBI" id="CHEBI:18408"/>
    </cofactor>
    <text evidence="1">Binds between the large and small subunits.</text>
</comment>
<comment type="pathway">
    <text evidence="1">Amine and polyamine degradation; ethanolamine degradation.</text>
</comment>
<comment type="subunit">
    <text evidence="1">The basic unit is a heterodimer which dimerizes to form tetramers. The heterotetramers trimerize; 6 large subunits form a core ring with 6 small subunits projecting outwards.</text>
</comment>
<comment type="subcellular location">
    <subcellularLocation>
        <location evidence="1">Bacterial microcompartment</location>
    </subcellularLocation>
</comment>
<comment type="similarity">
    <text evidence="1">Belongs to the EutC family.</text>
</comment>
<name>EUTC_SALAR</name>
<keyword id="KW-1283">Bacterial microcompartment</keyword>
<keyword id="KW-0846">Cobalamin</keyword>
<keyword id="KW-0170">Cobalt</keyword>
<keyword id="KW-0456">Lyase</keyword>
<keyword id="KW-1185">Reference proteome</keyword>
<accession>A9MIC6</accession>
<dbReference type="EC" id="4.3.1.7" evidence="1"/>
<dbReference type="EMBL" id="CP000880">
    <property type="protein sequence ID" value="ABX20363.1"/>
    <property type="molecule type" value="Genomic_DNA"/>
</dbReference>
<dbReference type="SMR" id="A9MIC6"/>
<dbReference type="STRING" id="41514.SARI_00427"/>
<dbReference type="KEGG" id="ses:SARI_00427"/>
<dbReference type="HOGENOM" id="CLU_068224_2_0_6"/>
<dbReference type="UniPathway" id="UPA00560"/>
<dbReference type="Proteomes" id="UP000002084">
    <property type="component" value="Chromosome"/>
</dbReference>
<dbReference type="GO" id="GO:0009350">
    <property type="term" value="C:ethanolamine ammonia-lyase complex"/>
    <property type="evidence" value="ECO:0007669"/>
    <property type="project" value="UniProtKB-UniRule"/>
</dbReference>
<dbReference type="GO" id="GO:0031471">
    <property type="term" value="C:ethanolamine degradation polyhedral organelle"/>
    <property type="evidence" value="ECO:0007669"/>
    <property type="project" value="UniProtKB-UniRule"/>
</dbReference>
<dbReference type="GO" id="GO:0031419">
    <property type="term" value="F:cobalamin binding"/>
    <property type="evidence" value="ECO:0007669"/>
    <property type="project" value="UniProtKB-UniRule"/>
</dbReference>
<dbReference type="GO" id="GO:0008851">
    <property type="term" value="F:ethanolamine ammonia-lyase activity"/>
    <property type="evidence" value="ECO:0007669"/>
    <property type="project" value="UniProtKB-UniRule"/>
</dbReference>
<dbReference type="GO" id="GO:0006520">
    <property type="term" value="P:amino acid metabolic process"/>
    <property type="evidence" value="ECO:0007669"/>
    <property type="project" value="InterPro"/>
</dbReference>
<dbReference type="GO" id="GO:0046336">
    <property type="term" value="P:ethanolamine catabolic process"/>
    <property type="evidence" value="ECO:0007669"/>
    <property type="project" value="UniProtKB-UniRule"/>
</dbReference>
<dbReference type="FunFam" id="3.40.50.11240:FF:000001">
    <property type="entry name" value="Ethanolamine ammonia-lyase light chain"/>
    <property type="match status" value="1"/>
</dbReference>
<dbReference type="Gene3D" id="6.10.140.690">
    <property type="match status" value="1"/>
</dbReference>
<dbReference type="Gene3D" id="6.10.250.2060">
    <property type="match status" value="1"/>
</dbReference>
<dbReference type="Gene3D" id="3.40.50.11240">
    <property type="entry name" value="Ethanolamine ammonia-lyase light chain (EutC)"/>
    <property type="match status" value="1"/>
</dbReference>
<dbReference type="HAMAP" id="MF_00601">
    <property type="entry name" value="EutC"/>
    <property type="match status" value="1"/>
</dbReference>
<dbReference type="InterPro" id="IPR009246">
    <property type="entry name" value="EutC"/>
</dbReference>
<dbReference type="InterPro" id="IPR042251">
    <property type="entry name" value="EutC_C"/>
</dbReference>
<dbReference type="NCBIfam" id="NF003971">
    <property type="entry name" value="PRK05465.1"/>
    <property type="match status" value="1"/>
</dbReference>
<dbReference type="PANTHER" id="PTHR39330">
    <property type="entry name" value="ETHANOLAMINE AMMONIA-LYASE LIGHT CHAIN"/>
    <property type="match status" value="1"/>
</dbReference>
<dbReference type="PANTHER" id="PTHR39330:SF1">
    <property type="entry name" value="ETHANOLAMINE AMMONIA-LYASE SMALL SUBUNIT"/>
    <property type="match status" value="1"/>
</dbReference>
<dbReference type="Pfam" id="PF05985">
    <property type="entry name" value="EutC"/>
    <property type="match status" value="1"/>
</dbReference>
<dbReference type="PIRSF" id="PIRSF018982">
    <property type="entry name" value="EutC"/>
    <property type="match status" value="1"/>
</dbReference>
<proteinExistence type="inferred from homology"/>